<proteinExistence type="inferred from homology"/>
<comment type="function">
    <text evidence="1 6">MAP4K component of the MAPK pathway required for the mating pheromone response, and the regulation of cell polarity and cell cycle. Phosphorylates histone H2B to form H2BS10ph (By similarity). Required for hyphal formation and virulence.</text>
</comment>
<comment type="catalytic activity">
    <reaction>
        <text>L-seryl-[protein] + ATP = O-phospho-L-seryl-[protein] + ADP + H(+)</text>
        <dbReference type="Rhea" id="RHEA:17989"/>
        <dbReference type="Rhea" id="RHEA-COMP:9863"/>
        <dbReference type="Rhea" id="RHEA-COMP:11604"/>
        <dbReference type="ChEBI" id="CHEBI:15378"/>
        <dbReference type="ChEBI" id="CHEBI:29999"/>
        <dbReference type="ChEBI" id="CHEBI:30616"/>
        <dbReference type="ChEBI" id="CHEBI:83421"/>
        <dbReference type="ChEBI" id="CHEBI:456216"/>
        <dbReference type="EC" id="2.7.11.1"/>
    </reaction>
</comment>
<comment type="catalytic activity">
    <reaction>
        <text>L-threonyl-[protein] + ATP = O-phospho-L-threonyl-[protein] + ADP + H(+)</text>
        <dbReference type="Rhea" id="RHEA:46608"/>
        <dbReference type="Rhea" id="RHEA-COMP:11060"/>
        <dbReference type="Rhea" id="RHEA-COMP:11605"/>
        <dbReference type="ChEBI" id="CHEBI:15378"/>
        <dbReference type="ChEBI" id="CHEBI:30013"/>
        <dbReference type="ChEBI" id="CHEBI:30616"/>
        <dbReference type="ChEBI" id="CHEBI:61977"/>
        <dbReference type="ChEBI" id="CHEBI:456216"/>
        <dbReference type="EC" id="2.7.11.1"/>
    </reaction>
</comment>
<comment type="subcellular location">
    <subcellularLocation>
        <location evidence="1">Cytoplasm</location>
    </subcellularLocation>
    <subcellularLocation>
        <location evidence="1">Nucleus</location>
    </subcellularLocation>
</comment>
<comment type="similarity">
    <text evidence="7">Belongs to the protein kinase superfamily. STE Ser/Thr protein kinase family. STE20 subfamily.</text>
</comment>
<gene>
    <name type="primary">CST20</name>
    <name type="synonym">HST20</name>
    <name type="synonym">STE20</name>
</gene>
<protein>
    <recommendedName>
        <fullName>Serine/threonine-protein kinase CST20</fullName>
        <ecNumber>2.7.11.1</ecNumber>
    </recommendedName>
</protein>
<organism>
    <name type="scientific">Candida albicans</name>
    <name type="common">Yeast</name>
    <dbReference type="NCBI Taxonomy" id="5476"/>
    <lineage>
        <taxon>Eukaryota</taxon>
        <taxon>Fungi</taxon>
        <taxon>Dikarya</taxon>
        <taxon>Ascomycota</taxon>
        <taxon>Saccharomycotina</taxon>
        <taxon>Pichiomycetes</taxon>
        <taxon>Debaryomycetaceae</taxon>
        <taxon>Candida/Lodderomyces clade</taxon>
        <taxon>Candida</taxon>
    </lineage>
</organism>
<sequence>MSILSENNPTPTSITDPNKSSHLHNPELNSGTRVASGPGPGPEAESTPLAPPTEVMNTTSANTSSLSLGSPMHEKIKQFDQDEVDTGETNDRTIESGSGDIDDSQQSHNNNNNNNNNNNESNPESSEGDDEKTQGMPPRMPGTFNVKGLHQGDDSDNEKQYTELTKSINKRTSKDSYSPGTLESPGTLNALETNNVSPAVIEEEQHTSSLEDLSLSLQHQNENARLSAPRSAPPQVPTSKTSSFHDMSSVISSSTSVHKIPSNPTSTRGSHLSSYKSTLDPGKPAQAAAPPPPEIDIDNLLTKSELDSETDTLSSATNSPNLLRNDTLQGIPTRDDENIDDSPRQLSQNTSATSRNTSGTSTSTVVKNSRSGTSKSTSTSTAHNQTAAITPIIPSHNKFHQQVINTNATNSLSSLEPLGVGINSNSSPKSGKKRKSGSKVRGVFSSMFGKNKSTSSSSSSNSGSNSHSQEVNIKISTPFNAKHLAHVGIDDNGSYTGLPIEWERLLSASGITKKEQQQHPQAVMDIVAFYQDTSENPDDAAFKKFHFDNNKSSSSGWSNENTPPATPGGSNSGSGSGGGGAPSSPHRTPPSSIIEKNNVEQKVITPSQSMPTKTESKQSENQHPHEDNATQYTPRTPTSHVQEGQFIPSRPAPKPPSTPLSSMSVSHKTPSSQSLPRSDSQSDIRSSTPKSHQDVSPSKIKIRSISSKSLKSMRSRKSGDKFTHIAPAPPPPSLPSIPKSKSHSASLSSQLRPATNGSTTAPIPASAAFGGENNALPKQRINEFKAHRAPPPPPSAPPAPPVPPAPPANLLSEQTSEIPQQRTAPSQALADVTAPTNIYEIQQTKYQEAQQKLREKKARELEEIQRLREKNERQNRQQETGQNNADTASGGSNIAPPVPVPNKKPPSGSGGGRDAKQAALIAQKKREEKKRKNLQIIAKLKTICNPGDPNELYVDLVKIGQGASGGVFLAHDVRDKSNIVAIKQMNLEQQPKKELIINEILVMKGSSHPNIVNFIDSYLLKGDLWVIMEYMEGGSLTDIVTHSVMTEGQIGVVCRETLKGLKFLHSKGVIHRDIKSDNILLNMDGNIKITDFGFCAQINEINSKRITMVGTPYWMAPEIVSRKEYGPKVDVWSLGIMIIEMLEGEPPYLNETPLRALYLIATNGTPKLKDPESLSYDIRKFLAWCLQVDFNKRADADELLHDNFITECDDVSSLSPLVKIARLKKMSESD</sequence>
<feature type="chain" id="PRO_0000086685" description="Serine/threonine-protein kinase CST20">
    <location>
        <begin position="1"/>
        <end position="1230"/>
    </location>
</feature>
<feature type="domain" description="CRIB" evidence="2">
    <location>
        <begin position="475"/>
        <end position="488"/>
    </location>
</feature>
<feature type="domain" description="Protein kinase" evidence="3">
    <location>
        <begin position="953"/>
        <end position="1205"/>
    </location>
</feature>
<feature type="region of interest" description="Disordered" evidence="5">
    <location>
        <begin position="1"/>
        <end position="384"/>
    </location>
</feature>
<feature type="region of interest" description="Disordered" evidence="5">
    <location>
        <begin position="413"/>
        <end position="470"/>
    </location>
</feature>
<feature type="region of interest" description="Disordered" evidence="5">
    <location>
        <begin position="545"/>
        <end position="831"/>
    </location>
</feature>
<feature type="region of interest" description="Disordered" evidence="5">
    <location>
        <begin position="867"/>
        <end position="919"/>
    </location>
</feature>
<feature type="compositionally biased region" description="Polar residues" evidence="5">
    <location>
        <begin position="1"/>
        <end position="20"/>
    </location>
</feature>
<feature type="compositionally biased region" description="Low complexity" evidence="5">
    <location>
        <begin position="57"/>
        <end position="70"/>
    </location>
</feature>
<feature type="compositionally biased region" description="Low complexity" evidence="5">
    <location>
        <begin position="96"/>
        <end position="125"/>
    </location>
</feature>
<feature type="compositionally biased region" description="Basic and acidic residues" evidence="5">
    <location>
        <begin position="150"/>
        <end position="161"/>
    </location>
</feature>
<feature type="compositionally biased region" description="Polar residues" evidence="5">
    <location>
        <begin position="175"/>
        <end position="197"/>
    </location>
</feature>
<feature type="compositionally biased region" description="Polar residues" evidence="5">
    <location>
        <begin position="207"/>
        <end position="224"/>
    </location>
</feature>
<feature type="compositionally biased region" description="Polar residues" evidence="5">
    <location>
        <begin position="237"/>
        <end position="246"/>
    </location>
</feature>
<feature type="compositionally biased region" description="Low complexity" evidence="5">
    <location>
        <begin position="248"/>
        <end position="257"/>
    </location>
</feature>
<feature type="compositionally biased region" description="Polar residues" evidence="5">
    <location>
        <begin position="262"/>
        <end position="277"/>
    </location>
</feature>
<feature type="compositionally biased region" description="Polar residues" evidence="5">
    <location>
        <begin position="311"/>
        <end position="330"/>
    </location>
</feature>
<feature type="compositionally biased region" description="Low complexity" evidence="5">
    <location>
        <begin position="349"/>
        <end position="381"/>
    </location>
</feature>
<feature type="compositionally biased region" description="Low complexity" evidence="5">
    <location>
        <begin position="439"/>
        <end position="468"/>
    </location>
</feature>
<feature type="compositionally biased region" description="Polar residues" evidence="5">
    <location>
        <begin position="550"/>
        <end position="561"/>
    </location>
</feature>
<feature type="compositionally biased region" description="Gly residues" evidence="5">
    <location>
        <begin position="570"/>
        <end position="581"/>
    </location>
</feature>
<feature type="compositionally biased region" description="Polar residues" evidence="5">
    <location>
        <begin position="604"/>
        <end position="613"/>
    </location>
</feature>
<feature type="compositionally biased region" description="Basic and acidic residues" evidence="5">
    <location>
        <begin position="614"/>
        <end position="628"/>
    </location>
</feature>
<feature type="compositionally biased region" description="Polar residues" evidence="5">
    <location>
        <begin position="629"/>
        <end position="642"/>
    </location>
</feature>
<feature type="compositionally biased region" description="Low complexity" evidence="5">
    <location>
        <begin position="670"/>
        <end position="683"/>
    </location>
</feature>
<feature type="compositionally biased region" description="Low complexity" evidence="5">
    <location>
        <begin position="696"/>
        <end position="710"/>
    </location>
</feature>
<feature type="compositionally biased region" description="Low complexity" evidence="5">
    <location>
        <begin position="736"/>
        <end position="749"/>
    </location>
</feature>
<feature type="compositionally biased region" description="Polar residues" evidence="5">
    <location>
        <begin position="750"/>
        <end position="761"/>
    </location>
</feature>
<feature type="compositionally biased region" description="Pro residues" evidence="5">
    <location>
        <begin position="789"/>
        <end position="807"/>
    </location>
</feature>
<feature type="compositionally biased region" description="Polar residues" evidence="5">
    <location>
        <begin position="811"/>
        <end position="826"/>
    </location>
</feature>
<feature type="compositionally biased region" description="Basic and acidic residues" evidence="5">
    <location>
        <begin position="867"/>
        <end position="876"/>
    </location>
</feature>
<feature type="compositionally biased region" description="Polar residues" evidence="5">
    <location>
        <begin position="877"/>
        <end position="892"/>
    </location>
</feature>
<feature type="active site" description="Proton acceptor" evidence="3 4">
    <location>
        <position position="1073"/>
    </location>
</feature>
<feature type="binding site" evidence="3">
    <location>
        <begin position="959"/>
        <end position="967"/>
    </location>
    <ligand>
        <name>ATP</name>
        <dbReference type="ChEBI" id="CHEBI:30616"/>
    </ligand>
</feature>
<feature type="binding site" evidence="3">
    <location>
        <position position="983"/>
    </location>
    <ligand>
        <name>ATP</name>
        <dbReference type="ChEBI" id="CHEBI:30616"/>
    </ligand>
</feature>
<evidence type="ECO:0000250" key="1"/>
<evidence type="ECO:0000255" key="2">
    <source>
        <dbReference type="PROSITE-ProRule" id="PRU00057"/>
    </source>
</evidence>
<evidence type="ECO:0000255" key="3">
    <source>
        <dbReference type="PROSITE-ProRule" id="PRU00159"/>
    </source>
</evidence>
<evidence type="ECO:0000255" key="4">
    <source>
        <dbReference type="PROSITE-ProRule" id="PRU10027"/>
    </source>
</evidence>
<evidence type="ECO:0000256" key="5">
    <source>
        <dbReference type="SAM" id="MobiDB-lite"/>
    </source>
</evidence>
<evidence type="ECO:0000269" key="6">
    <source>
    </source>
</evidence>
<evidence type="ECO:0000305" key="7"/>
<reference key="1">
    <citation type="journal article" date="1996" name="Proc. Natl. Acad. Sci. U.S.A.">
        <title>Candida albicans strains heterozygous and homozygous for mutations in mitogen-activated protein kinase signaling components have defects in hyphal development.</title>
        <authorList>
            <person name="Koehler J.R."/>
            <person name="Fink G.R."/>
        </authorList>
    </citation>
    <scope>NUCLEOTIDE SEQUENCE [GENOMIC DNA]</scope>
    <scope>FUNCTION</scope>
    <source>
        <strain>1066</strain>
    </source>
</reference>
<name>STE20_CANAX</name>
<dbReference type="EC" id="2.7.11.1"/>
<dbReference type="EMBL" id="U73457">
    <property type="protein sequence ID" value="AAB38875.1"/>
    <property type="molecule type" value="Genomic_DNA"/>
</dbReference>
<dbReference type="PIR" id="T18259">
    <property type="entry name" value="T18259"/>
</dbReference>
<dbReference type="SMR" id="P0CY23"/>
<dbReference type="VEuPathDB" id="FungiDB:C5_02340C_A"/>
<dbReference type="VEuPathDB" id="FungiDB:CAWG_04616"/>
<dbReference type="VEuPathDB" id="FungiDB:CAWG_04617"/>
<dbReference type="BRENDA" id="2.7.11.1">
    <property type="organism ID" value="1096"/>
</dbReference>
<dbReference type="PHI-base" id="PHI:461"/>
<dbReference type="GO" id="GO:0005737">
    <property type="term" value="C:cytoplasm"/>
    <property type="evidence" value="ECO:0007669"/>
    <property type="project" value="UniProtKB-SubCell"/>
</dbReference>
<dbReference type="GO" id="GO:0005634">
    <property type="term" value="C:nucleus"/>
    <property type="evidence" value="ECO:0007669"/>
    <property type="project" value="UniProtKB-SubCell"/>
</dbReference>
<dbReference type="GO" id="GO:0005524">
    <property type="term" value="F:ATP binding"/>
    <property type="evidence" value="ECO:0007669"/>
    <property type="project" value="UniProtKB-KW"/>
</dbReference>
<dbReference type="GO" id="GO:0106310">
    <property type="term" value="F:protein serine kinase activity"/>
    <property type="evidence" value="ECO:0007669"/>
    <property type="project" value="RHEA"/>
</dbReference>
<dbReference type="GO" id="GO:0004674">
    <property type="term" value="F:protein serine/threonine kinase activity"/>
    <property type="evidence" value="ECO:0007669"/>
    <property type="project" value="UniProtKB-KW"/>
</dbReference>
<dbReference type="GO" id="GO:0030447">
    <property type="term" value="P:filamentous growth"/>
    <property type="evidence" value="ECO:0007669"/>
    <property type="project" value="UniProtKB-ARBA"/>
</dbReference>
<dbReference type="CDD" id="cd01093">
    <property type="entry name" value="CRIB_PAK_like"/>
    <property type="match status" value="1"/>
</dbReference>
<dbReference type="CDD" id="cd06614">
    <property type="entry name" value="STKc_PAK"/>
    <property type="match status" value="1"/>
</dbReference>
<dbReference type="CDD" id="cd22249">
    <property type="entry name" value="UDM1_RNF168_RNF169-like"/>
    <property type="match status" value="1"/>
</dbReference>
<dbReference type="FunFam" id="1.10.510.10:FF:000011">
    <property type="entry name" value="Non-specific serine/threonine protein kinase"/>
    <property type="match status" value="1"/>
</dbReference>
<dbReference type="FunFam" id="3.30.200.20:FF:000385">
    <property type="entry name" value="Non-specific serine/threonine protein kinase"/>
    <property type="match status" value="1"/>
</dbReference>
<dbReference type="Gene3D" id="3.90.810.10">
    <property type="entry name" value="CRIB domain"/>
    <property type="match status" value="1"/>
</dbReference>
<dbReference type="Gene3D" id="3.30.200.20">
    <property type="entry name" value="Phosphorylase Kinase, domain 1"/>
    <property type="match status" value="1"/>
</dbReference>
<dbReference type="Gene3D" id="1.10.510.10">
    <property type="entry name" value="Transferase(Phosphotransferase) domain 1"/>
    <property type="match status" value="1"/>
</dbReference>
<dbReference type="InterPro" id="IPR000095">
    <property type="entry name" value="CRIB_dom"/>
</dbReference>
<dbReference type="InterPro" id="IPR036936">
    <property type="entry name" value="CRIB_dom_sf"/>
</dbReference>
<dbReference type="InterPro" id="IPR011009">
    <property type="entry name" value="Kinase-like_dom_sf"/>
</dbReference>
<dbReference type="InterPro" id="IPR051931">
    <property type="entry name" value="PAK3-like"/>
</dbReference>
<dbReference type="InterPro" id="IPR033923">
    <property type="entry name" value="PAK_BD"/>
</dbReference>
<dbReference type="InterPro" id="IPR000719">
    <property type="entry name" value="Prot_kinase_dom"/>
</dbReference>
<dbReference type="InterPro" id="IPR017441">
    <property type="entry name" value="Protein_kinase_ATP_BS"/>
</dbReference>
<dbReference type="InterPro" id="IPR008271">
    <property type="entry name" value="Ser/Thr_kinase_AS"/>
</dbReference>
<dbReference type="PANTHER" id="PTHR45832">
    <property type="entry name" value="SERINE/THREONINE-PROTEIN KINASE SAMKA-RELATED-RELATED"/>
    <property type="match status" value="1"/>
</dbReference>
<dbReference type="PANTHER" id="PTHR45832:SF22">
    <property type="entry name" value="SERINE_THREONINE-PROTEIN KINASE SAMKA-RELATED"/>
    <property type="match status" value="1"/>
</dbReference>
<dbReference type="Pfam" id="PF00786">
    <property type="entry name" value="PBD"/>
    <property type="match status" value="1"/>
</dbReference>
<dbReference type="Pfam" id="PF00069">
    <property type="entry name" value="Pkinase"/>
    <property type="match status" value="1"/>
</dbReference>
<dbReference type="SMART" id="SM00285">
    <property type="entry name" value="PBD"/>
    <property type="match status" value="1"/>
</dbReference>
<dbReference type="SMART" id="SM00220">
    <property type="entry name" value="S_TKc"/>
    <property type="match status" value="1"/>
</dbReference>
<dbReference type="SUPFAM" id="SSF56112">
    <property type="entry name" value="Protein kinase-like (PK-like)"/>
    <property type="match status" value="1"/>
</dbReference>
<dbReference type="PROSITE" id="PS50108">
    <property type="entry name" value="CRIB"/>
    <property type="match status" value="1"/>
</dbReference>
<dbReference type="PROSITE" id="PS00107">
    <property type="entry name" value="PROTEIN_KINASE_ATP"/>
    <property type="match status" value="1"/>
</dbReference>
<dbReference type="PROSITE" id="PS50011">
    <property type="entry name" value="PROTEIN_KINASE_DOM"/>
    <property type="match status" value="1"/>
</dbReference>
<dbReference type="PROSITE" id="PS00108">
    <property type="entry name" value="PROTEIN_KINASE_ST"/>
    <property type="match status" value="1"/>
</dbReference>
<keyword id="KW-0067">ATP-binding</keyword>
<keyword id="KW-0963">Cytoplasm</keyword>
<keyword id="KW-0418">Kinase</keyword>
<keyword id="KW-0547">Nucleotide-binding</keyword>
<keyword id="KW-0539">Nucleus</keyword>
<keyword id="KW-0723">Serine/threonine-protein kinase</keyword>
<keyword id="KW-0808">Transferase</keyword>
<accession>P0CY23</accession>
<accession>O13431</accession>
<accession>Q5AGD7</accession>
<accession>Q92212</accession>